<reference key="1">
    <citation type="journal article" date="2010" name="PLoS ONE">
        <title>The complete genome sequence of Cupriavidus metallidurans strain CH34, a master survivalist in harsh and anthropogenic environments.</title>
        <authorList>
            <person name="Janssen P.J."/>
            <person name="Van Houdt R."/>
            <person name="Moors H."/>
            <person name="Monsieurs P."/>
            <person name="Morin N."/>
            <person name="Michaux A."/>
            <person name="Benotmane M.A."/>
            <person name="Leys N."/>
            <person name="Vallaeys T."/>
            <person name="Lapidus A."/>
            <person name="Monchy S."/>
            <person name="Medigue C."/>
            <person name="Taghavi S."/>
            <person name="McCorkle S."/>
            <person name="Dunn J."/>
            <person name="van der Lelie D."/>
            <person name="Mergeay M."/>
        </authorList>
    </citation>
    <scope>NUCLEOTIDE SEQUENCE [LARGE SCALE GENOMIC DNA]</scope>
    <source>
        <strain>ATCC 43123 / DSM 2839 / NBRC 102507 / CH34</strain>
    </source>
</reference>
<gene>
    <name evidence="1" type="primary">ruvC</name>
    <name type="ordered locus">Rmet_0426</name>
</gene>
<sequence>MRILGIDPGLRTTGFGVLEKHGNKLAYVASGTIRSNGETSLPERLKTLYDGISEVARTYAPDCAAIEKVFVNVNPQSTLLLGQARGAAICGLVGQGLPVFEYTALQLKVAVVGYGRANKEQVQEMVMRLLSLSGRPSSDAADALGVAICHANGGDTLGTLAGLAPELARKGMRVRRGRLVG</sequence>
<feature type="chain" id="PRO_1000002808" description="Crossover junction endodeoxyribonuclease RuvC">
    <location>
        <begin position="1"/>
        <end position="181"/>
    </location>
</feature>
<feature type="active site" evidence="1">
    <location>
        <position position="7"/>
    </location>
</feature>
<feature type="active site" evidence="1">
    <location>
        <position position="67"/>
    </location>
</feature>
<feature type="active site" evidence="1">
    <location>
        <position position="139"/>
    </location>
</feature>
<feature type="binding site" evidence="1">
    <location>
        <position position="7"/>
    </location>
    <ligand>
        <name>Mg(2+)</name>
        <dbReference type="ChEBI" id="CHEBI:18420"/>
        <label>1</label>
    </ligand>
</feature>
<feature type="binding site" evidence="1">
    <location>
        <position position="67"/>
    </location>
    <ligand>
        <name>Mg(2+)</name>
        <dbReference type="ChEBI" id="CHEBI:18420"/>
        <label>2</label>
    </ligand>
</feature>
<feature type="binding site" evidence="1">
    <location>
        <position position="139"/>
    </location>
    <ligand>
        <name>Mg(2+)</name>
        <dbReference type="ChEBI" id="CHEBI:18420"/>
        <label>1</label>
    </ligand>
</feature>
<accession>Q1LRB4</accession>
<protein>
    <recommendedName>
        <fullName evidence="1">Crossover junction endodeoxyribonuclease RuvC</fullName>
        <ecNumber evidence="1">3.1.21.10</ecNumber>
    </recommendedName>
    <alternativeName>
        <fullName evidence="1">Holliday junction nuclease RuvC</fullName>
    </alternativeName>
    <alternativeName>
        <fullName evidence="1">Holliday junction resolvase RuvC</fullName>
    </alternativeName>
</protein>
<evidence type="ECO:0000255" key="1">
    <source>
        <dbReference type="HAMAP-Rule" id="MF_00034"/>
    </source>
</evidence>
<dbReference type="EC" id="3.1.21.10" evidence="1"/>
<dbReference type="EMBL" id="CP000352">
    <property type="protein sequence ID" value="ABF07312.1"/>
    <property type="molecule type" value="Genomic_DNA"/>
</dbReference>
<dbReference type="RefSeq" id="WP_008646027.1">
    <property type="nucleotide sequence ID" value="NC_007973.1"/>
</dbReference>
<dbReference type="SMR" id="Q1LRB4"/>
<dbReference type="STRING" id="266264.Rmet_0426"/>
<dbReference type="GeneID" id="60824028"/>
<dbReference type="KEGG" id="rme:Rmet_0426"/>
<dbReference type="eggNOG" id="COG0817">
    <property type="taxonomic scope" value="Bacteria"/>
</dbReference>
<dbReference type="HOGENOM" id="CLU_091257_3_1_4"/>
<dbReference type="Proteomes" id="UP000002429">
    <property type="component" value="Chromosome"/>
</dbReference>
<dbReference type="GO" id="GO:0005737">
    <property type="term" value="C:cytoplasm"/>
    <property type="evidence" value="ECO:0007669"/>
    <property type="project" value="UniProtKB-SubCell"/>
</dbReference>
<dbReference type="GO" id="GO:0048476">
    <property type="term" value="C:Holliday junction resolvase complex"/>
    <property type="evidence" value="ECO:0007669"/>
    <property type="project" value="UniProtKB-UniRule"/>
</dbReference>
<dbReference type="GO" id="GO:0008821">
    <property type="term" value="F:crossover junction DNA endonuclease activity"/>
    <property type="evidence" value="ECO:0007669"/>
    <property type="project" value="UniProtKB-UniRule"/>
</dbReference>
<dbReference type="GO" id="GO:0003677">
    <property type="term" value="F:DNA binding"/>
    <property type="evidence" value="ECO:0007669"/>
    <property type="project" value="UniProtKB-KW"/>
</dbReference>
<dbReference type="GO" id="GO:0000287">
    <property type="term" value="F:magnesium ion binding"/>
    <property type="evidence" value="ECO:0007669"/>
    <property type="project" value="UniProtKB-UniRule"/>
</dbReference>
<dbReference type="GO" id="GO:0006310">
    <property type="term" value="P:DNA recombination"/>
    <property type="evidence" value="ECO:0007669"/>
    <property type="project" value="UniProtKB-UniRule"/>
</dbReference>
<dbReference type="GO" id="GO:0006281">
    <property type="term" value="P:DNA repair"/>
    <property type="evidence" value="ECO:0007669"/>
    <property type="project" value="UniProtKB-UniRule"/>
</dbReference>
<dbReference type="CDD" id="cd16962">
    <property type="entry name" value="RuvC"/>
    <property type="match status" value="1"/>
</dbReference>
<dbReference type="FunFam" id="3.30.420.10:FF:000002">
    <property type="entry name" value="Crossover junction endodeoxyribonuclease RuvC"/>
    <property type="match status" value="1"/>
</dbReference>
<dbReference type="Gene3D" id="3.30.420.10">
    <property type="entry name" value="Ribonuclease H-like superfamily/Ribonuclease H"/>
    <property type="match status" value="1"/>
</dbReference>
<dbReference type="HAMAP" id="MF_00034">
    <property type="entry name" value="RuvC"/>
    <property type="match status" value="1"/>
</dbReference>
<dbReference type="InterPro" id="IPR012337">
    <property type="entry name" value="RNaseH-like_sf"/>
</dbReference>
<dbReference type="InterPro" id="IPR036397">
    <property type="entry name" value="RNaseH_sf"/>
</dbReference>
<dbReference type="InterPro" id="IPR020563">
    <property type="entry name" value="X-over_junc_endoDNase_Mg_BS"/>
</dbReference>
<dbReference type="InterPro" id="IPR002176">
    <property type="entry name" value="X-over_junc_endoDNase_RuvC"/>
</dbReference>
<dbReference type="NCBIfam" id="TIGR00228">
    <property type="entry name" value="ruvC"/>
    <property type="match status" value="1"/>
</dbReference>
<dbReference type="PANTHER" id="PTHR30194">
    <property type="entry name" value="CROSSOVER JUNCTION ENDODEOXYRIBONUCLEASE RUVC"/>
    <property type="match status" value="1"/>
</dbReference>
<dbReference type="PANTHER" id="PTHR30194:SF3">
    <property type="entry name" value="CROSSOVER JUNCTION ENDODEOXYRIBONUCLEASE RUVC"/>
    <property type="match status" value="1"/>
</dbReference>
<dbReference type="Pfam" id="PF02075">
    <property type="entry name" value="RuvC"/>
    <property type="match status" value="1"/>
</dbReference>
<dbReference type="PRINTS" id="PR00696">
    <property type="entry name" value="RSOLVASERUVC"/>
</dbReference>
<dbReference type="SUPFAM" id="SSF53098">
    <property type="entry name" value="Ribonuclease H-like"/>
    <property type="match status" value="1"/>
</dbReference>
<dbReference type="PROSITE" id="PS01321">
    <property type="entry name" value="RUVC"/>
    <property type="match status" value="1"/>
</dbReference>
<comment type="function">
    <text evidence="1">The RuvA-RuvB-RuvC complex processes Holliday junction (HJ) DNA during genetic recombination and DNA repair. Endonuclease that resolves HJ intermediates. Cleaves cruciform DNA by making single-stranded nicks across the HJ at symmetrical positions within the homologous arms, yielding a 5'-phosphate and a 3'-hydroxyl group; requires a central core of homology in the junction. The consensus cleavage sequence is 5'-(A/T)TT(C/G)-3'. Cleavage occurs on the 3'-side of the TT dinucleotide at the point of strand exchange. HJ branch migration catalyzed by RuvA-RuvB allows RuvC to scan DNA until it finds its consensus sequence, where it cleaves and resolves the cruciform DNA.</text>
</comment>
<comment type="catalytic activity">
    <reaction evidence="1">
        <text>Endonucleolytic cleavage at a junction such as a reciprocal single-stranded crossover between two homologous DNA duplexes (Holliday junction).</text>
        <dbReference type="EC" id="3.1.21.10"/>
    </reaction>
</comment>
<comment type="cofactor">
    <cofactor evidence="1">
        <name>Mg(2+)</name>
        <dbReference type="ChEBI" id="CHEBI:18420"/>
    </cofactor>
    <text evidence="1">Binds 2 Mg(2+) ion per subunit.</text>
</comment>
<comment type="subunit">
    <text evidence="1">Homodimer which binds Holliday junction (HJ) DNA. The HJ becomes 2-fold symmetrical on binding to RuvC with unstacked arms; it has a different conformation from HJ DNA in complex with RuvA. In the full resolvosome a probable DNA-RuvA(4)-RuvB(12)-RuvC(2) complex forms which resolves the HJ.</text>
</comment>
<comment type="subcellular location">
    <subcellularLocation>
        <location evidence="1">Cytoplasm</location>
    </subcellularLocation>
</comment>
<comment type="similarity">
    <text evidence="1">Belongs to the RuvC family.</text>
</comment>
<name>RUVC_CUPMC</name>
<organism>
    <name type="scientific">Cupriavidus metallidurans (strain ATCC 43123 / DSM 2839 / NBRC 102507 / CH34)</name>
    <name type="common">Ralstonia metallidurans</name>
    <dbReference type="NCBI Taxonomy" id="266264"/>
    <lineage>
        <taxon>Bacteria</taxon>
        <taxon>Pseudomonadati</taxon>
        <taxon>Pseudomonadota</taxon>
        <taxon>Betaproteobacteria</taxon>
        <taxon>Burkholderiales</taxon>
        <taxon>Burkholderiaceae</taxon>
        <taxon>Cupriavidus</taxon>
    </lineage>
</organism>
<keyword id="KW-0963">Cytoplasm</keyword>
<keyword id="KW-0227">DNA damage</keyword>
<keyword id="KW-0233">DNA recombination</keyword>
<keyword id="KW-0234">DNA repair</keyword>
<keyword id="KW-0238">DNA-binding</keyword>
<keyword id="KW-0255">Endonuclease</keyword>
<keyword id="KW-0378">Hydrolase</keyword>
<keyword id="KW-0460">Magnesium</keyword>
<keyword id="KW-0479">Metal-binding</keyword>
<keyword id="KW-0540">Nuclease</keyword>
<keyword id="KW-1185">Reference proteome</keyword>
<proteinExistence type="inferred from homology"/>